<protein>
    <recommendedName>
        <fullName evidence="22">NADPH-dependent 3-demethoxyubiquinone 3-hydroxylase, mitochondrial</fullName>
        <ecNumber evidence="6">1.14.13.253</ecNumber>
    </recommendedName>
    <alternativeName>
        <fullName evidence="22">3-demethoxyubiquinone 3-hydroxylase (NADH)</fullName>
    </alternativeName>
    <alternativeName>
        <fullName evidence="1">Timing protein clk-1 homolog</fullName>
    </alternativeName>
    <alternativeName>
        <fullName evidence="1">Ubiquinone biosynthesis monooxygenase COQ7</fullName>
    </alternativeName>
</protein>
<keyword id="KW-0002">3D-structure</keyword>
<keyword id="KW-0025">Alternative splicing</keyword>
<keyword id="KW-0158">Chromosome</keyword>
<keyword id="KW-0225">Disease variant</keyword>
<keyword id="KW-0408">Iron</keyword>
<keyword id="KW-0472">Membrane</keyword>
<keyword id="KW-0479">Metal-binding</keyword>
<keyword id="KW-0496">Mitochondrion</keyword>
<keyword id="KW-0999">Mitochondrion inner membrane</keyword>
<keyword id="KW-0503">Monooxygenase</keyword>
<keyword id="KW-0523">Neurodegeneration</keyword>
<keyword id="KW-0622">Neuropathy</keyword>
<keyword id="KW-0539">Nucleus</keyword>
<keyword id="KW-0560">Oxidoreductase</keyword>
<keyword id="KW-1274">Primary mitochondrial disease</keyword>
<keyword id="KW-1267">Proteomics identification</keyword>
<keyword id="KW-1185">Reference proteome</keyword>
<keyword id="KW-0677">Repeat</keyword>
<keyword id="KW-0809">Transit peptide</keyword>
<keyword id="KW-0831">Ubiquinone biosynthesis</keyword>
<organism>
    <name type="scientific">Homo sapiens</name>
    <name type="common">Human</name>
    <dbReference type="NCBI Taxonomy" id="9606"/>
    <lineage>
        <taxon>Eukaryota</taxon>
        <taxon>Metazoa</taxon>
        <taxon>Chordata</taxon>
        <taxon>Craniata</taxon>
        <taxon>Vertebrata</taxon>
        <taxon>Euteleostomi</taxon>
        <taxon>Mammalia</taxon>
        <taxon>Eutheria</taxon>
        <taxon>Euarchontoglires</taxon>
        <taxon>Primates</taxon>
        <taxon>Haplorrhini</taxon>
        <taxon>Catarrhini</taxon>
        <taxon>Hominidae</taxon>
        <taxon>Homo</taxon>
    </lineage>
</organism>
<comment type="function">
    <text evidence="1 6 9 11 22 23 24">Catalyzes the hydroxylation of the 5-methoxy-2-methyl-3-(all-trans-polyprenyl)benzoquinone at the C6 position and participates in the biosynthesis of ubiquinone (Probable). Catalyzes the reaction through a substrate-mediated reduction pathway, whereby NADH shuttles electrons to 5-methoxy-2-methyl-3-(all-trans-decaprenyl)benzoquinone, which then transfers the electrons to the two Fe(3+) centers (PubMed:23445365). The binding of 5-methoxy-2-methyl-3-(all-trans-polyprenyl)benzoquinone (DMQn) mediates reduction of the diiron center by nicotinamide adenine dinucleotide (NADH) and initiates oxygen activation for subsequent DMQ hydroxylation (PubMed:23445365). The physiological substrates are 5-methoxy-2-methyl-3-(all-trans-nonaprenyl)benzoquinone (DMQ(9)) and 5-methoxy-2-methyl-3-(all-trans-decaprenyl)benzoquinone (DMQ(10)), however in vitro the enzyme does not have any specificity concerning the length of the polyprenyl tail, and accepts tails of various lengths with similar efficiency (PubMed:23445365, PubMed:28409910). Also has a structural role in the COQ enzyme complex, stabilizing other COQ polypeptides. Involved in lifespan determination in a ubiquinone-independent manner (By similarity). Plays a role in modulating mitochondrial stress responses, acting in the nucleus, perhaps via regulating gene expression, independent of its characterized mitochondrial function in ubiquinone biosynthesis (PubMed:25961505).</text>
</comment>
<comment type="catalytic activity">
    <reaction evidence="6 23 24">
        <text>a 5-methoxy-2-methyl-3-(all-trans-polyprenyl)benzoquinone + NADH + O2 = a 3-demethylubiquinone + NAD(+) + H2O</text>
        <dbReference type="Rhea" id="RHEA:81211"/>
        <dbReference type="Rhea" id="RHEA-COMP:19654"/>
        <dbReference type="Rhea" id="RHEA-COMP:19655"/>
        <dbReference type="ChEBI" id="CHEBI:15377"/>
        <dbReference type="ChEBI" id="CHEBI:15379"/>
        <dbReference type="ChEBI" id="CHEBI:57540"/>
        <dbReference type="ChEBI" id="CHEBI:57945"/>
        <dbReference type="ChEBI" id="CHEBI:231825"/>
        <dbReference type="ChEBI" id="CHEBI:231829"/>
        <dbReference type="EC" id="1.14.13.253"/>
    </reaction>
    <physiologicalReaction direction="left-to-right" evidence="6 24">
        <dbReference type="Rhea" id="RHEA:81212"/>
    </physiologicalReaction>
</comment>
<comment type="cofactor">
    <cofactor evidence="6">
        <name>Fe cation</name>
        <dbReference type="ChEBI" id="CHEBI:24875"/>
    </cofactor>
    <text evidence="6">Binds 2 iron ions per subunit.</text>
</comment>
<comment type="biophysicochemical properties">
    <kinetics>
        <KM evidence="6">68.1 uM for 2-methoxy-5-methyl-1,4-benzoquinone (reaction performed in 20 mM Tris (pH 7.0))</KM>
        <KM evidence="6">204 uM for 2-methoxy-5-methyl-1,4-benzoquinone (reaction performed in deuteriated Tris buffer)</KM>
        <KM evidence="6">33.8 uM for 5-methoxy-2-methyl-3-(all-trans-diprenyl)benzoquinone</KM>
    </kinetics>
</comment>
<comment type="pathway">
    <text evidence="6 18">Cofactor biosynthesis; ubiquinone biosynthesis.</text>
</comment>
<comment type="subunit">
    <text evidence="1 7 8">Component of a multi-subunit COQ enzyme complex (By similarity). Interacts with COQ8B and COQ6 (PubMed:24270420). Interacts with COQ9 (PubMed:25339443).</text>
</comment>
<comment type="interaction">
    <interactant intactId="EBI-11017131">
        <id>Q99807</id>
    </interactant>
    <interactant intactId="EBI-10897372">
        <id>Q9NZJ6</id>
        <label>COQ3</label>
    </interactant>
    <organismsDiffer>false</organismsDiffer>
    <experiments>5</experiments>
</comment>
<comment type="interaction">
    <interactant intactId="EBI-11017131">
        <id>Q99807</id>
    </interactant>
    <interactant intactId="EBI-12284865">
        <id>Q9Y3A0</id>
        <label>COQ4</label>
    </interactant>
    <organismsDiffer>false</organismsDiffer>
    <experiments>5</experiments>
</comment>
<comment type="interaction">
    <interactant intactId="EBI-11017131">
        <id>Q99807</id>
    </interactant>
    <interactant intactId="EBI-12577722">
        <id>Q5HYK3</id>
        <label>COQ5</label>
    </interactant>
    <organismsDiffer>false</organismsDiffer>
    <experiments>7</experiments>
</comment>
<comment type="interaction">
    <interactant intactId="EBI-11017131">
        <id>Q99807</id>
    </interactant>
    <interactant intactId="EBI-718148">
        <id>Q9Y2Z9</id>
        <label>COQ6</label>
    </interactant>
    <organismsDiffer>false</organismsDiffer>
    <experiments>3</experiments>
</comment>
<comment type="interaction">
    <interactant intactId="EBI-11017131">
        <id>Q99807</id>
    </interactant>
    <interactant intactId="EBI-724524">
        <id>O75208</id>
        <label>COQ9</label>
    </interactant>
    <organismsDiffer>false</organismsDiffer>
    <experiments>8</experiments>
</comment>
<comment type="subcellular location">
    <subcellularLocation>
        <location evidence="1">Mitochondrion inner membrane</location>
        <topology evidence="1">Peripheral membrane protein</topology>
        <orientation evidence="1">Matrix side</orientation>
    </subcellularLocation>
    <subcellularLocation>
        <location evidence="9">Mitochondrion</location>
    </subcellularLocation>
    <subcellularLocation>
        <location evidence="9">Nucleus</location>
    </subcellularLocation>
    <subcellularLocation>
        <location evidence="9">Chromosome</location>
    </subcellularLocation>
</comment>
<comment type="alternative products">
    <event type="alternative splicing"/>
    <isoform>
        <id>Q99807-1</id>
        <name>1</name>
        <sequence type="displayed"/>
    </isoform>
    <isoform>
        <id>Q99807-2</id>
        <name>2</name>
        <sequence type="described" ref="VSP_039068"/>
    </isoform>
</comment>
<comment type="tissue specificity">
    <text evidence="2">Expressed dominantly in heart and skeletal muscle.</text>
</comment>
<comment type="disease" evidence="10 11 12 13 14 17">
    <disease id="DI-04625">
        <name>Coenzyme Q10 deficiency, primary, 8</name>
        <acronym>COQ10D8</acronym>
        <description>An autosomal recessive disorder resulting from mitochondrial dysfunction and characterized by decreased levels of coenzyme Q10. Patients manifest neonatal lung hypoplasia, contractures, early infantile hypertension and cardiac hypertrophy, secondary to prenatal kidney dysplasia, with neonatal and infantile renal dysfunction. Clinical features also include progressive peripheral neuropathy, muscular hypotonia and atrophy, and mild psychomotor delay with hearing and visual impairment.</description>
        <dbReference type="MIM" id="616733"/>
    </disease>
    <text>The disease is caused by variants affecting the gene represented in this entry.</text>
</comment>
<comment type="disease" evidence="16 17">
    <disease id="DI-06769">
        <name>Neuronopathy, distal hereditary motor, autosomal recessive 9</name>
        <acronym>HMNR9</acronym>
        <description>A form of distal hereditary motor neuronopathy, a heterogeneous group of neuromuscular diseases caused by selective degeneration of motor neurons in the anterior horn of the spinal cord, without sensory deficit in the posterior horn. HMNR9 is a slowly progressive form characterized by juvenile onset of distal muscle weakness and atrophy particularly affecting the lower limbs, although most patients also have upper limb involvement. Additional features include pes cavus, foot drop, and inability to walk on the heels or tiptoes. Some patients may have mild sensory abnormalities or pyramidal signs.</description>
        <dbReference type="MIM" id="620402"/>
    </disease>
    <text>The disease is caused by variants affecting the gene represented in this entry.</text>
</comment>
<comment type="similarity">
    <text evidence="1">Belongs to the COQ7 family.</text>
</comment>
<name>COQ7_HUMAN</name>
<evidence type="ECO:0000255" key="1">
    <source>
        <dbReference type="HAMAP-Rule" id="MF_03194"/>
    </source>
</evidence>
<evidence type="ECO:0000269" key="2">
    <source>
    </source>
</evidence>
<evidence type="ECO:0000269" key="3">
    <source>
    </source>
</evidence>
<evidence type="ECO:0000269" key="4">
    <source>
    </source>
</evidence>
<evidence type="ECO:0000269" key="5">
    <source>
    </source>
</evidence>
<evidence type="ECO:0000269" key="6">
    <source>
    </source>
</evidence>
<evidence type="ECO:0000269" key="7">
    <source>
    </source>
</evidence>
<evidence type="ECO:0000269" key="8">
    <source>
    </source>
</evidence>
<evidence type="ECO:0000269" key="9">
    <source>
    </source>
</evidence>
<evidence type="ECO:0000269" key="10">
    <source>
    </source>
</evidence>
<evidence type="ECO:0000269" key="11">
    <source>
    </source>
</evidence>
<evidence type="ECO:0000269" key="12">
    <source>
    </source>
</evidence>
<evidence type="ECO:0000269" key="13">
    <source>
    </source>
</evidence>
<evidence type="ECO:0000269" key="14">
    <source>
    </source>
</evidence>
<evidence type="ECO:0000269" key="15">
    <source>
    </source>
</evidence>
<evidence type="ECO:0000269" key="16">
    <source>
    </source>
</evidence>
<evidence type="ECO:0000269" key="17">
    <source>
    </source>
</evidence>
<evidence type="ECO:0000269" key="18">
    <source>
    </source>
</evidence>
<evidence type="ECO:0000269" key="19">
    <source>
    </source>
</evidence>
<evidence type="ECO:0000303" key="20">
    <source>
    </source>
</evidence>
<evidence type="ECO:0000305" key="21"/>
<evidence type="ECO:0000305" key="22">
    <source>
    </source>
</evidence>
<evidence type="ECO:0000305" key="23">
    <source>
    </source>
</evidence>
<evidence type="ECO:0000305" key="24">
    <source>
    </source>
</evidence>
<evidence type="ECO:0000312" key="25">
    <source>
        <dbReference type="HGNC" id="HGNC:2244"/>
    </source>
</evidence>
<evidence type="ECO:0007744" key="26">
    <source>
        <dbReference type="PDB" id="7SSP"/>
    </source>
</evidence>
<evidence type="ECO:0007744" key="27">
    <source>
        <dbReference type="PDB" id="7SSS"/>
    </source>
</evidence>
<evidence type="ECO:0007829" key="28">
    <source>
        <dbReference type="PDB" id="7SSS"/>
    </source>
</evidence>
<reference key="1">
    <citation type="journal article" date="1999" name="Genomics">
        <title>Orthologues of the Caenorhabditis elegans longevity gene clk-1 in mouse and human.</title>
        <authorList>
            <person name="Asaumi S."/>
            <person name="Kuroyanagi H."/>
            <person name="Seki N."/>
            <person name="Shirasawa T."/>
        </authorList>
    </citation>
    <scope>NUCLEOTIDE SEQUENCE [MRNA] (ISOFORM 1)</scope>
    <scope>TISSUE SPECIFICITY</scope>
    <scope>VARIANT MET-103</scope>
</reference>
<reference key="2">
    <citation type="journal article" date="2001" name="Genome Res.">
        <title>Towards a catalog of human genes and proteins: sequencing and analysis of 500 novel complete protein coding human cDNAs.</title>
        <authorList>
            <person name="Wiemann S."/>
            <person name="Weil B."/>
            <person name="Wellenreuther R."/>
            <person name="Gassenhuber J."/>
            <person name="Glassl S."/>
            <person name="Ansorge W."/>
            <person name="Boecher M."/>
            <person name="Bloecker H."/>
            <person name="Bauersachs S."/>
            <person name="Blum H."/>
            <person name="Lauber J."/>
            <person name="Duesterhoeft A."/>
            <person name="Beyer A."/>
            <person name="Koehrer K."/>
            <person name="Strack N."/>
            <person name="Mewes H.-W."/>
            <person name="Ottenwaelder B."/>
            <person name="Obermaier B."/>
            <person name="Tampe J."/>
            <person name="Heubner D."/>
            <person name="Wambutt R."/>
            <person name="Korn B."/>
            <person name="Klein M."/>
            <person name="Poustka A."/>
        </authorList>
    </citation>
    <scope>NUCLEOTIDE SEQUENCE [LARGE SCALE MRNA] (ISOFORM 2)</scope>
    <scope>VARIANT MET-103</scope>
    <source>
        <tissue>Brain</tissue>
    </source>
</reference>
<reference key="3">
    <citation type="journal article" date="2004" name="Nat. Genet.">
        <title>Complete sequencing and characterization of 21,243 full-length human cDNAs.</title>
        <authorList>
            <person name="Ota T."/>
            <person name="Suzuki Y."/>
            <person name="Nishikawa T."/>
            <person name="Otsuki T."/>
            <person name="Sugiyama T."/>
            <person name="Irie R."/>
            <person name="Wakamatsu A."/>
            <person name="Hayashi K."/>
            <person name="Sato H."/>
            <person name="Nagai K."/>
            <person name="Kimura K."/>
            <person name="Makita H."/>
            <person name="Sekine M."/>
            <person name="Obayashi M."/>
            <person name="Nishi T."/>
            <person name="Shibahara T."/>
            <person name="Tanaka T."/>
            <person name="Ishii S."/>
            <person name="Yamamoto J."/>
            <person name="Saito K."/>
            <person name="Kawai Y."/>
            <person name="Isono Y."/>
            <person name="Nakamura Y."/>
            <person name="Nagahari K."/>
            <person name="Murakami K."/>
            <person name="Yasuda T."/>
            <person name="Iwayanagi T."/>
            <person name="Wagatsuma M."/>
            <person name="Shiratori A."/>
            <person name="Sudo H."/>
            <person name="Hosoiri T."/>
            <person name="Kaku Y."/>
            <person name="Kodaira H."/>
            <person name="Kondo H."/>
            <person name="Sugawara M."/>
            <person name="Takahashi M."/>
            <person name="Kanda K."/>
            <person name="Yokoi T."/>
            <person name="Furuya T."/>
            <person name="Kikkawa E."/>
            <person name="Omura Y."/>
            <person name="Abe K."/>
            <person name="Kamihara K."/>
            <person name="Katsuta N."/>
            <person name="Sato K."/>
            <person name="Tanikawa M."/>
            <person name="Yamazaki M."/>
            <person name="Ninomiya K."/>
            <person name="Ishibashi T."/>
            <person name="Yamashita H."/>
            <person name="Murakawa K."/>
            <person name="Fujimori K."/>
            <person name="Tanai H."/>
            <person name="Kimata M."/>
            <person name="Watanabe M."/>
            <person name="Hiraoka S."/>
            <person name="Chiba Y."/>
            <person name="Ishida S."/>
            <person name="Ono Y."/>
            <person name="Takiguchi S."/>
            <person name="Watanabe S."/>
            <person name="Yosida M."/>
            <person name="Hotuta T."/>
            <person name="Kusano J."/>
            <person name="Kanehori K."/>
            <person name="Takahashi-Fujii A."/>
            <person name="Hara H."/>
            <person name="Tanase T.-O."/>
            <person name="Nomura Y."/>
            <person name="Togiya S."/>
            <person name="Komai F."/>
            <person name="Hara R."/>
            <person name="Takeuchi K."/>
            <person name="Arita M."/>
            <person name="Imose N."/>
            <person name="Musashino K."/>
            <person name="Yuuki H."/>
            <person name="Oshima A."/>
            <person name="Sasaki N."/>
            <person name="Aotsuka S."/>
            <person name="Yoshikawa Y."/>
            <person name="Matsunawa H."/>
            <person name="Ichihara T."/>
            <person name="Shiohata N."/>
            <person name="Sano S."/>
            <person name="Moriya S."/>
            <person name="Momiyama H."/>
            <person name="Satoh N."/>
            <person name="Takami S."/>
            <person name="Terashima Y."/>
            <person name="Suzuki O."/>
            <person name="Nakagawa S."/>
            <person name="Senoh A."/>
            <person name="Mizoguchi H."/>
            <person name="Goto Y."/>
            <person name="Shimizu F."/>
            <person name="Wakebe H."/>
            <person name="Hishigaki H."/>
            <person name="Watanabe T."/>
            <person name="Sugiyama A."/>
            <person name="Takemoto M."/>
            <person name="Kawakami B."/>
            <person name="Yamazaki M."/>
            <person name="Watanabe K."/>
            <person name="Kumagai A."/>
            <person name="Itakura S."/>
            <person name="Fukuzumi Y."/>
            <person name="Fujimori Y."/>
            <person name="Komiyama M."/>
            <person name="Tashiro H."/>
            <person name="Tanigami A."/>
            <person name="Fujiwara T."/>
            <person name="Ono T."/>
            <person name="Yamada K."/>
            <person name="Fujii Y."/>
            <person name="Ozaki K."/>
            <person name="Hirao M."/>
            <person name="Ohmori Y."/>
            <person name="Kawabata A."/>
            <person name="Hikiji T."/>
            <person name="Kobatake N."/>
            <person name="Inagaki H."/>
            <person name="Ikema Y."/>
            <person name="Okamoto S."/>
            <person name="Okitani R."/>
            <person name="Kawakami T."/>
            <person name="Noguchi S."/>
            <person name="Itoh T."/>
            <person name="Shigeta K."/>
            <person name="Senba T."/>
            <person name="Matsumura K."/>
            <person name="Nakajima Y."/>
            <person name="Mizuno T."/>
            <person name="Morinaga M."/>
            <person name="Sasaki M."/>
            <person name="Togashi T."/>
            <person name="Oyama M."/>
            <person name="Hata H."/>
            <person name="Watanabe M."/>
            <person name="Komatsu T."/>
            <person name="Mizushima-Sugano J."/>
            <person name="Satoh T."/>
            <person name="Shirai Y."/>
            <person name="Takahashi Y."/>
            <person name="Nakagawa K."/>
            <person name="Okumura K."/>
            <person name="Nagase T."/>
            <person name="Nomura N."/>
            <person name="Kikuchi H."/>
            <person name="Masuho Y."/>
            <person name="Yamashita R."/>
            <person name="Nakai K."/>
            <person name="Yada T."/>
            <person name="Nakamura Y."/>
            <person name="Ohara O."/>
            <person name="Isogai T."/>
            <person name="Sugano S."/>
        </authorList>
    </citation>
    <scope>NUCLEOTIDE SEQUENCE [LARGE SCALE MRNA] (ISOFORM 1)</scope>
    <scope>VARIANT MET-103</scope>
</reference>
<reference key="4">
    <citation type="journal article" date="2004" name="Nature">
        <title>The sequence and analysis of duplication-rich human chromosome 16.</title>
        <authorList>
            <person name="Martin J."/>
            <person name="Han C."/>
            <person name="Gordon L.A."/>
            <person name="Terry A."/>
            <person name="Prabhakar S."/>
            <person name="She X."/>
            <person name="Xie G."/>
            <person name="Hellsten U."/>
            <person name="Chan Y.M."/>
            <person name="Altherr M."/>
            <person name="Couronne O."/>
            <person name="Aerts A."/>
            <person name="Bajorek E."/>
            <person name="Black S."/>
            <person name="Blumer H."/>
            <person name="Branscomb E."/>
            <person name="Brown N.C."/>
            <person name="Bruno W.J."/>
            <person name="Buckingham J.M."/>
            <person name="Callen D.F."/>
            <person name="Campbell C.S."/>
            <person name="Campbell M.L."/>
            <person name="Campbell E.W."/>
            <person name="Caoile C."/>
            <person name="Challacombe J.F."/>
            <person name="Chasteen L.A."/>
            <person name="Chertkov O."/>
            <person name="Chi H.C."/>
            <person name="Christensen M."/>
            <person name="Clark L.M."/>
            <person name="Cohn J.D."/>
            <person name="Denys M."/>
            <person name="Detter J.C."/>
            <person name="Dickson M."/>
            <person name="Dimitrijevic-Bussod M."/>
            <person name="Escobar J."/>
            <person name="Fawcett J.J."/>
            <person name="Flowers D."/>
            <person name="Fotopulos D."/>
            <person name="Glavina T."/>
            <person name="Gomez M."/>
            <person name="Gonzales E."/>
            <person name="Goodstein D."/>
            <person name="Goodwin L.A."/>
            <person name="Grady D.L."/>
            <person name="Grigoriev I."/>
            <person name="Groza M."/>
            <person name="Hammon N."/>
            <person name="Hawkins T."/>
            <person name="Haydu L."/>
            <person name="Hildebrand C.E."/>
            <person name="Huang W."/>
            <person name="Israni S."/>
            <person name="Jett J."/>
            <person name="Jewett P.B."/>
            <person name="Kadner K."/>
            <person name="Kimball H."/>
            <person name="Kobayashi A."/>
            <person name="Krawczyk M.-C."/>
            <person name="Leyba T."/>
            <person name="Longmire J.L."/>
            <person name="Lopez F."/>
            <person name="Lou Y."/>
            <person name="Lowry S."/>
            <person name="Ludeman T."/>
            <person name="Manohar C.F."/>
            <person name="Mark G.A."/>
            <person name="McMurray K.L."/>
            <person name="Meincke L.J."/>
            <person name="Morgan J."/>
            <person name="Moyzis R.K."/>
            <person name="Mundt M.O."/>
            <person name="Munk A.C."/>
            <person name="Nandkeshwar R.D."/>
            <person name="Pitluck S."/>
            <person name="Pollard M."/>
            <person name="Predki P."/>
            <person name="Parson-Quintana B."/>
            <person name="Ramirez L."/>
            <person name="Rash S."/>
            <person name="Retterer J."/>
            <person name="Ricke D.O."/>
            <person name="Robinson D.L."/>
            <person name="Rodriguez A."/>
            <person name="Salamov A."/>
            <person name="Saunders E.H."/>
            <person name="Scott D."/>
            <person name="Shough T."/>
            <person name="Stallings R.L."/>
            <person name="Stalvey M."/>
            <person name="Sutherland R.D."/>
            <person name="Tapia R."/>
            <person name="Tesmer J.G."/>
            <person name="Thayer N."/>
            <person name="Thompson L.S."/>
            <person name="Tice H."/>
            <person name="Torney D.C."/>
            <person name="Tran-Gyamfi M."/>
            <person name="Tsai M."/>
            <person name="Ulanovsky L.E."/>
            <person name="Ustaszewska A."/>
            <person name="Vo N."/>
            <person name="White P.S."/>
            <person name="Williams A.L."/>
            <person name="Wills P.L."/>
            <person name="Wu J.-R."/>
            <person name="Wu K."/>
            <person name="Yang J."/>
            <person name="DeJong P."/>
            <person name="Bruce D."/>
            <person name="Doggett N.A."/>
            <person name="Deaven L."/>
            <person name="Schmutz J."/>
            <person name="Grimwood J."/>
            <person name="Richardson P."/>
            <person name="Rokhsar D.S."/>
            <person name="Eichler E.E."/>
            <person name="Gilna P."/>
            <person name="Lucas S.M."/>
            <person name="Myers R.M."/>
            <person name="Rubin E.M."/>
            <person name="Pennacchio L.A."/>
        </authorList>
    </citation>
    <scope>NUCLEOTIDE SEQUENCE [LARGE SCALE GENOMIC DNA]</scope>
</reference>
<reference key="5">
    <citation type="submission" date="2005-07" db="EMBL/GenBank/DDBJ databases">
        <authorList>
            <person name="Mural R.J."/>
            <person name="Istrail S."/>
            <person name="Sutton G.G."/>
            <person name="Florea L."/>
            <person name="Halpern A.L."/>
            <person name="Mobarry C.M."/>
            <person name="Lippert R."/>
            <person name="Walenz B."/>
            <person name="Shatkay H."/>
            <person name="Dew I."/>
            <person name="Miller J.R."/>
            <person name="Flanigan M.J."/>
            <person name="Edwards N.J."/>
            <person name="Bolanos R."/>
            <person name="Fasulo D."/>
            <person name="Halldorsson B.V."/>
            <person name="Hannenhalli S."/>
            <person name="Turner R."/>
            <person name="Yooseph S."/>
            <person name="Lu F."/>
            <person name="Nusskern D.R."/>
            <person name="Shue B.C."/>
            <person name="Zheng X.H."/>
            <person name="Zhong F."/>
            <person name="Delcher A.L."/>
            <person name="Huson D.H."/>
            <person name="Kravitz S.A."/>
            <person name="Mouchard L."/>
            <person name="Reinert K."/>
            <person name="Remington K.A."/>
            <person name="Clark A.G."/>
            <person name="Waterman M.S."/>
            <person name="Eichler E.E."/>
            <person name="Adams M.D."/>
            <person name="Hunkapiller M.W."/>
            <person name="Myers E.W."/>
            <person name="Venter J.C."/>
        </authorList>
    </citation>
    <scope>NUCLEOTIDE SEQUENCE [LARGE SCALE GENOMIC DNA]</scope>
</reference>
<reference key="6">
    <citation type="journal article" date="2004" name="Genome Res.">
        <title>The status, quality, and expansion of the NIH full-length cDNA project: the Mammalian Gene Collection (MGC).</title>
        <authorList>
            <consortium name="The MGC Project Team"/>
        </authorList>
    </citation>
    <scope>NUCLEOTIDE SEQUENCE [LARGE SCALE MRNA] (ISOFORM 1)</scope>
    <source>
        <tissue>Brain</tissue>
    </source>
</reference>
<reference key="7">
    <citation type="journal article" date="1999" name="Mamm. Genome">
        <title>Conservation of the Caenorhabditis elegans timing gene clk-1 from yeast to human: a gene required for ubiquinone biosynthesis with potential implications for aging.</title>
        <authorList>
            <person name="Vajo Z."/>
            <person name="King L.M."/>
            <person name="Jonassen T."/>
            <person name="Wilkin D.J."/>
            <person name="Ho N."/>
            <person name="Munnich A."/>
            <person name="Clarke C.F."/>
            <person name="Francomano C.A."/>
        </authorList>
    </citation>
    <scope>NUCLEOTIDE SEQUENCE [MRNA] OF 39-217 (ISOFORMS 1/2)</scope>
    <scope>VARIANT MET-103</scope>
</reference>
<reference key="8">
    <citation type="journal article" date="1997" name="Science">
        <title>Structural and functional conservation of the Caenorhabditis elegans timing gene clk-1.</title>
        <authorList>
            <person name="Ewbank J.J."/>
            <person name="Barnes T.M."/>
            <person name="Lakowski B."/>
            <person name="Lussier M."/>
            <person name="Bussey H."/>
            <person name="Hekimi S."/>
        </authorList>
    </citation>
    <scope>NUCLEOTIDE SEQUENCE [MRNA] OF 85-130 (ISOFORMS 1/2)</scope>
    <scope>VARIANT MET-103</scope>
    <source>
        <tissue>Placenta</tissue>
    </source>
</reference>
<reference key="9">
    <citation type="journal article" date="2011" name="BMC Syst. Biol.">
        <title>Initial characterization of the human central proteome.</title>
        <authorList>
            <person name="Burkard T.R."/>
            <person name="Planyavsky M."/>
            <person name="Kaupe I."/>
            <person name="Breitwieser F.P."/>
            <person name="Buerckstuemmer T."/>
            <person name="Bennett K.L."/>
            <person name="Superti-Furga G."/>
            <person name="Colinge J."/>
        </authorList>
    </citation>
    <scope>IDENTIFICATION BY MASS SPECTROMETRY [LARGE SCALE ANALYSIS]</scope>
</reference>
<reference key="10">
    <citation type="journal article" date="2013" name="Biochemistry">
        <title>Aging-associated enzyme human clock-1: substrate-mediated reduction of the diiron center for 5-demethoxyubiquinone hydroxylation.</title>
        <authorList>
            <person name="Lu T.T."/>
            <person name="Lee S.J."/>
            <person name="Apfel U.P."/>
            <person name="Lippard S.J."/>
        </authorList>
    </citation>
    <scope>FUNCTION</scope>
    <scope>CATALYTIC ACTIVITY</scope>
    <scope>COFACTOR</scope>
    <scope>BIOPHYSICOCHEMICAL PROPERTIES</scope>
    <scope>IDENTIFICATION BY MASS SPECTROMETRY</scope>
</reference>
<reference key="11">
    <citation type="journal article" date="2013" name="J. Clin. Invest.">
        <title>ADCK4 mutations promote steroid-resistant nephrotic syndrome through CoQ10 biosynthesis disruption.</title>
        <authorList>
            <person name="Ashraf S."/>
            <person name="Gee H.Y."/>
            <person name="Woerner S."/>
            <person name="Xie L.X."/>
            <person name="Vega-Warner V."/>
            <person name="Lovric S."/>
            <person name="Fang H."/>
            <person name="Song X."/>
            <person name="Cattran D.C."/>
            <person name="Avila-Casado C."/>
            <person name="Paterson A.D."/>
            <person name="Nitschke P."/>
            <person name="Bole-Feysot C."/>
            <person name="Cochat P."/>
            <person name="Esteve-Rudd J."/>
            <person name="Haberberger B."/>
            <person name="Allen S.J."/>
            <person name="Zhou W."/>
            <person name="Airik R."/>
            <person name="Otto E.A."/>
            <person name="Barua M."/>
            <person name="Al-Hamed M.H."/>
            <person name="Kari J.A."/>
            <person name="Evans J."/>
            <person name="Bierzynska A."/>
            <person name="Saleem M.A."/>
            <person name="Bockenhauer D."/>
            <person name="Kleta R."/>
            <person name="El Desoky S."/>
            <person name="Hacihamdioglu D.O."/>
            <person name="Gok F."/>
            <person name="Washburn J."/>
            <person name="Wiggins R.C."/>
            <person name="Choi M."/>
            <person name="Lifton R.P."/>
            <person name="Levy S."/>
            <person name="Han Z."/>
            <person name="Salviati L."/>
            <person name="Prokisch H."/>
            <person name="Williams D.S."/>
            <person name="Pollak M."/>
            <person name="Clarke C.F."/>
            <person name="Pei Y."/>
            <person name="Antignac C."/>
            <person name="Hildebrandt F."/>
        </authorList>
    </citation>
    <scope>INTERACTION WITH COQ8B AND COQ6</scope>
</reference>
<reference key="12">
    <citation type="journal article" date="2014" name="J. Proteomics">
        <title>An enzyme assisted RP-RPLC approach for in-depth analysis of human liver phosphoproteome.</title>
        <authorList>
            <person name="Bian Y."/>
            <person name="Song C."/>
            <person name="Cheng K."/>
            <person name="Dong M."/>
            <person name="Wang F."/>
            <person name="Huang J."/>
            <person name="Sun D."/>
            <person name="Wang L."/>
            <person name="Ye M."/>
            <person name="Zou H."/>
        </authorList>
    </citation>
    <scope>IDENTIFICATION BY MASS SPECTROMETRY [LARGE SCALE ANALYSIS]</scope>
    <source>
        <tissue>Liver</tissue>
    </source>
</reference>
<reference key="13">
    <citation type="journal article" date="2014" name="Proc. Natl. Acad. Sci. U.S.A.">
        <title>Mitochondrial COQ9 is a lipid-binding protein that associates with COQ7 to enable coenzyme Q biosynthesis.</title>
        <authorList>
            <person name="Lohman D.C."/>
            <person name="Forouhar F."/>
            <person name="Beebe E.T."/>
            <person name="Stefely M.S."/>
            <person name="Minogue C.E."/>
            <person name="Ulbrich A."/>
            <person name="Stefely J.A."/>
            <person name="Sukumar S."/>
            <person name="Luna-Sanchez M."/>
            <person name="Jochem A."/>
            <person name="Lew S."/>
            <person name="Seetharaman J."/>
            <person name="Xiao R."/>
            <person name="Wang H."/>
            <person name="Westphall M.S."/>
            <person name="Wrobel R.L."/>
            <person name="Everett J.K."/>
            <person name="Mitchell J.C."/>
            <person name="Lopez L.C."/>
            <person name="Coon J.J."/>
            <person name="Tong L."/>
            <person name="Pagliarini D.J."/>
        </authorList>
    </citation>
    <scope>INTERACTION WITH COQ9</scope>
</reference>
<reference key="14">
    <citation type="journal article" date="2015" name="J. Med. Genet.">
        <title>Rescue of primary ubiquinone deficiency due to a novel COQ7 defect using 2,4-dihydroxybensoic acid.</title>
        <authorList>
            <person name="Freyer C."/>
            <person name="Stranneheim H."/>
            <person name="Naess K."/>
            <person name="Mourier A."/>
            <person name="Felser A."/>
            <person name="Maffezzini C."/>
            <person name="Lesko N."/>
            <person name="Bruhn H."/>
            <person name="Engvall M."/>
            <person name="Wibom R."/>
            <person name="Barbaro M."/>
            <person name="Hinze Y."/>
            <person name="Magnusson M."/>
            <person name="Andeer R."/>
            <person name="Zetterstroem R.H."/>
            <person name="von Doebeln U."/>
            <person name="Wredenberg A."/>
            <person name="Wedell A."/>
        </authorList>
    </citation>
    <scope>INVOLVEMENT IN COQ10D8</scope>
    <scope>VARIANT COQ10D8 GLU-141</scope>
</reference>
<reference key="15">
    <citation type="journal article" date="2015" name="Nat. Cell Biol.">
        <title>A nuclear role for the respiratory enzyme CLK-1 in regulating mitochondrial stress responses and longevity.</title>
        <authorList>
            <person name="Monaghan R.M."/>
            <person name="Barnes R.G."/>
            <person name="Fisher K."/>
            <person name="Andreou T."/>
            <person name="Rooney N."/>
            <person name="Poulin G.B."/>
            <person name="Whitmarsh A.J."/>
        </authorList>
    </citation>
    <scope>FUNCTION</scope>
    <scope>SUBCELLULAR LOCATION</scope>
    <scope>MUTAGENESIS OF ARG-28</scope>
</reference>
<reference key="16">
    <citation type="journal article" date="2015" name="Proteomics">
        <title>N-terminome analysis of the human mitochondrial proteome.</title>
        <authorList>
            <person name="Vaca Jacome A.S."/>
            <person name="Rabilloud T."/>
            <person name="Schaeffer-Reiss C."/>
            <person name="Rompais M."/>
            <person name="Ayoub D."/>
            <person name="Lane L."/>
            <person name="Bairoch A."/>
            <person name="Van Dorsselaer A."/>
            <person name="Carapito C."/>
        </authorList>
    </citation>
    <scope>IDENTIFICATION BY MASS SPECTROMETRY [LARGE SCALE ANALYSIS]</scope>
</reference>
<reference key="17">
    <citation type="journal article" date="2024" name="Nat. Catal.">
        <title>In vitro construction of the COQ metabolon unveils the molecular determinants of coenzyme Q biosynthesis.</title>
        <authorList>
            <person name="Nicoll C.R."/>
            <person name="Alvigini L."/>
            <person name="Gottinger A."/>
            <person name="Cecchini D."/>
            <person name="Mannucci B."/>
            <person name="Corana F."/>
            <person name="Mascotti M.L."/>
            <person name="Mattevi A."/>
        </authorList>
    </citation>
    <scope>FUNCTION</scope>
    <scope>CATALYTIC ACTIVITY</scope>
</reference>
<reference evidence="26 27" key="18">
    <citation type="journal article" date="2022" name="Mol. Cell">
        <title>Structure and functionality of a multimeric human COQ7:COQ9 complex.</title>
        <authorList>
            <person name="Manicki M."/>
            <person name="Aydin H."/>
            <person name="Abriata L.A."/>
            <person name="Overmyer K.A."/>
            <person name="Guerra R.M."/>
            <person name="Coon J.J."/>
            <person name="Dal Peraro M."/>
            <person name="Frost A."/>
            <person name="Pagliarini D.J."/>
        </authorList>
    </citation>
    <scope>STRUCTURE BY ELECTRON MICROSCOPY (2.40 ANGSTROMS)IN COMPLEX WITH BOUND MEMBRANE LIPIDS; COQ9 AND NADH</scope>
    <scope>MUTAGENESIS OF ARG-51; ARG-208; TYR-212 AND ARG-216</scope>
</reference>
<reference key="19">
    <citation type="journal article" date="2017" name="J. Cell. Mol. Med.">
        <title>Pathogenicity of two COQ7 mutations and responses to 2,4-dihydroxybenzoate bypass treatment.</title>
        <authorList>
            <person name="Wang Y."/>
            <person name="Smith C."/>
            <person name="Parboosingh J.S."/>
            <person name="Khan A."/>
            <person name="Innes M."/>
            <person name="Hekimi S."/>
        </authorList>
    </citation>
    <scope>VARIANTS COQ10D8 PRO-111 AND GLU-141</scope>
    <scope>CHARACTERIZATION OF VARIANTS COQ10D8 PRO-111 AND GLU-141</scope>
    <scope>VARIANT MET-103</scope>
    <scope>MUTAGENESIS OF GLU-178</scope>
    <scope>FUNCTION</scope>
    <scope>CATALYTIC ACTIVITY</scope>
</reference>
<reference key="20">
    <citation type="journal article" date="2019" name="JIMD Rep.">
        <title>A fatal case of COQ7-associated primary coenzyme Q10 deficiency.</title>
        <authorList>
            <person name="Kwong A.K."/>
            <person name="Chiu A.T."/>
            <person name="Tsang M.H."/>
            <person name="Lun K.S."/>
            <person name="Rodenburg R.J.T."/>
            <person name="Smeitink J."/>
            <person name="Chung B.H."/>
            <person name="Fung C.W."/>
        </authorList>
    </citation>
    <scope>VARIANT COQ10D8 TRP-107</scope>
    <scope>CHARACTERIZATION OF VARIANT COQ10D8 TRP-107</scope>
</reference>
<reference key="21">
    <citation type="journal article" date="2021" name="Am. J. Med. Genet. A">
        <title>Clinical spectrum in multiple families with primary COQ10 deficiency.</title>
        <authorList>
            <person name="Hashemi S.S."/>
            <person name="Zare-Abdollahi D."/>
            <person name="Bakhshandeh M.K."/>
            <person name="Vafaee A."/>
            <person name="Abolhasani S."/>
            <person name="Inanloo Rahatloo K."/>
            <person name="DanaeeFard F."/>
            <person name="Farboodi N."/>
            <person name="Rohani M."/>
            <person name="Alavi A."/>
        </authorList>
    </citation>
    <scope>VARIANT COQ10D8 PRO-111</scope>
</reference>
<reference key="22">
    <citation type="journal article" date="2022" name="Mol. Genet. Metab. Rep.">
        <title>A novel COQ7 mutation causing primarily neuromuscular pathology and its treatment options.</title>
        <authorList>
            <person name="Wang Y."/>
            <person name="Gumus E."/>
            <person name="Hekimi S."/>
        </authorList>
    </citation>
    <scope>VARIANT COQ10D8 GLN-54</scope>
    <scope>CHARACTERIZATION OF VARIANT COQ10D8 GLN-54</scope>
</reference>
<reference key="23">
    <citation type="journal article" date="2023" name="Brain">
        <title>Biallelic variants in the COQ7 gene cause distal hereditary motor neuropathy in two Chinese families.</title>
        <authorList>
            <person name="Liu X.X."/>
            <person name="Wang N."/>
            <person name="Chen Y.K."/>
            <person name="Lv W.Q."/>
            <person name="Hong J.M."/>
            <person name="Xu G.R."/>
            <person name="Zhou L.Y."/>
            <person name="Chen W.J."/>
            <person name="Fan D.S."/>
            <person name="He J."/>
        </authorList>
    </citation>
    <scope>INVOLVEMENT IN HMNR9</scope>
    <scope>VARIANTS HMNR9 TRP-54; GLN-156 AND ARG-156</scope>
</reference>
<reference key="24">
    <citation type="journal article" date="2023" name="Mol. Genet. Metab.">
        <title>Phenotypic, molecular, and functional characterization of COQ7-related primary CoQ10 deficiency: Hypomorphic variants and two distinct disease entities.</title>
        <authorList>
            <person name="Wongkittichote P."/>
            <person name="Duque Lasio M.L."/>
            <person name="Magistrati M."/>
            <person name="Pathak S."/>
            <person name="Sample B."/>
            <person name="Carvalho D.R."/>
            <person name="Ortega A.B."/>
            <person name="Castro M.A.A."/>
            <person name="de Gusmao C.M."/>
            <person name="Toler T.L."/>
            <person name="Bellacchio E."/>
            <person name="Dallabona C."/>
            <person name="Shinawi M."/>
        </authorList>
    </citation>
    <scope>VARIANTS COQ10D8 GLN-54 AND CYS-149</scope>
    <scope>VARIANTS HMNR9 GLN-54 AND CYS-149</scope>
</reference>
<sequence length="217" mass="24277">MSCAGAAAAPRLWRLRPGARRSLSAYGRRTSVRFRSSGMTLDNISRAAVDRIIRVDHAGEYGANRIYAGQMAVLGRTSVGPVIQKMWDQEKDHLKKFNELMVTFRVRPTVLMPLWNVLGFALGAGTALLGKEGAMACTVAVEESIAHHYNNQIRTLMEEDPEKYEELLQLIKKFRDEELEHHDIGLDHDAELAPAYAVLKSIIQAGCRVAIYLSERL</sequence>
<gene>
    <name evidence="1 25" type="primary">COQ7</name>
</gene>
<proteinExistence type="evidence at protein level"/>
<feature type="transit peptide" description="Mitochondrion" evidence="1">
    <location>
        <begin position="1"/>
        <end position="35"/>
    </location>
</feature>
<feature type="chain" id="PRO_0000079251" description="NADPH-dependent 3-demethoxyubiquinone 3-hydroxylase, mitochondrial">
    <location>
        <begin position="36"/>
        <end position="217"/>
    </location>
</feature>
<feature type="repeat" description="1">
    <location>
        <begin position="48"/>
        <end position="129"/>
    </location>
</feature>
<feature type="repeat" description="2">
    <location>
        <begin position="130"/>
        <end position="217"/>
    </location>
</feature>
<feature type="region of interest" description="Required for nuclear localization" evidence="9">
    <location>
        <begin position="11"/>
        <end position="29"/>
    </location>
</feature>
<feature type="region of interest" description="2 X approximate tandem repeats">
    <location>
        <begin position="48"/>
        <end position="217"/>
    </location>
</feature>
<feature type="binding site" evidence="15 27">
    <location>
        <position position="51"/>
    </location>
    <ligand>
        <name>NADH</name>
        <dbReference type="ChEBI" id="CHEBI:57945"/>
    </ligand>
</feature>
<feature type="binding site" evidence="1">
    <location>
        <position position="60"/>
    </location>
    <ligand>
        <name>Fe cation</name>
        <dbReference type="ChEBI" id="CHEBI:24875"/>
        <label>1</label>
    </ligand>
</feature>
<feature type="binding site" evidence="1">
    <location>
        <position position="90"/>
    </location>
    <ligand>
        <name>Fe cation</name>
        <dbReference type="ChEBI" id="CHEBI:24875"/>
        <label>1</label>
    </ligand>
</feature>
<feature type="binding site" evidence="1">
    <location>
        <position position="90"/>
    </location>
    <ligand>
        <name>Fe cation</name>
        <dbReference type="ChEBI" id="CHEBI:24875"/>
        <label>2</label>
    </ligand>
</feature>
<feature type="binding site" evidence="1">
    <location>
        <position position="93"/>
    </location>
    <ligand>
        <name>Fe cation</name>
        <dbReference type="ChEBI" id="CHEBI:24875"/>
        <label>1</label>
    </ligand>
</feature>
<feature type="binding site" evidence="1">
    <location>
        <position position="142"/>
    </location>
    <ligand>
        <name>Fe cation</name>
        <dbReference type="ChEBI" id="CHEBI:24875"/>
        <label>2</label>
    </ligand>
</feature>
<feature type="binding site" evidence="1">
    <location>
        <position position="178"/>
    </location>
    <ligand>
        <name>Fe cation</name>
        <dbReference type="ChEBI" id="CHEBI:24875"/>
        <label>1</label>
    </ligand>
</feature>
<feature type="binding site" evidence="1">
    <location>
        <position position="178"/>
    </location>
    <ligand>
        <name>Fe cation</name>
        <dbReference type="ChEBI" id="CHEBI:24875"/>
        <label>2</label>
    </ligand>
</feature>
<feature type="binding site" evidence="1">
    <location>
        <position position="181"/>
    </location>
    <ligand>
        <name>Fe cation</name>
        <dbReference type="ChEBI" id="CHEBI:24875"/>
        <label>2</label>
    </ligand>
</feature>
<feature type="binding site" evidence="15 27">
    <location>
        <position position="212"/>
    </location>
    <ligand>
        <name>NADH</name>
        <dbReference type="ChEBI" id="CHEBI:57945"/>
    </ligand>
</feature>
<feature type="binding site" evidence="15 27">
    <location>
        <position position="216"/>
    </location>
    <ligand>
        <name>NADH</name>
        <dbReference type="ChEBI" id="CHEBI:57945"/>
    </ligand>
</feature>
<feature type="splice variant" id="VSP_039068" description="In isoform 2." evidence="20">
    <location>
        <begin position="1"/>
        <end position="38"/>
    </location>
</feature>
<feature type="sequence variant" id="VAR_089032" description="In COQ10D8 and HMNR9; likely pathogenic; decreased COQ7 and COQ10 protein levels in homozygous COQ10D8 patient cells." evidence="14 17">
    <original>R</original>
    <variation>Q</variation>
    <location>
        <position position="54"/>
    </location>
</feature>
<feature type="sequence variant" id="VAR_089033" description="In HMNR9; uncertain significance." evidence="16">
    <original>R</original>
    <variation>W</variation>
    <location>
        <position position="54"/>
    </location>
</feature>
<feature type="sequence variant" id="VAR_055148" description="In dbSNP:rs11074359." evidence="2 3 4 5 11 19">
    <original>T</original>
    <variation>M</variation>
    <location>
        <position position="103"/>
    </location>
</feature>
<feature type="sequence variant" id="VAR_089034" description="In COQ10D8; uncertain significance." evidence="12">
    <original>R</original>
    <variation>W</variation>
    <location>
        <position position="107"/>
    </location>
</feature>
<feature type="sequence variant" id="VAR_089035" description="In COQ10D8; likely pathogenic; decreased NADPH-dependent 3-demethoxyubiquinone 3-hydroxylase activity in ubiquinone biosynthetic process; decreased expression." evidence="11 13">
    <original>L</original>
    <variation>P</variation>
    <location>
        <position position="111"/>
    </location>
</feature>
<feature type="sequence variant" id="VAR_076370" description="In COQ10D8; decreased NADPH-dependent 3-demethoxyubiquinone 3-hydroxylase activity in ubiquinone biosynthetic process; decreased expression; dbSNP:rs864321686." evidence="10 11">
    <original>V</original>
    <variation>E</variation>
    <location>
        <position position="141"/>
    </location>
</feature>
<feature type="sequence variant" id="VAR_089036" description="In COQ10D8 and HMNR9; uncertain significance." evidence="17">
    <original>Y</original>
    <variation>C</variation>
    <location>
        <position position="149"/>
    </location>
</feature>
<feature type="sequence variant" id="VAR_089037" description="In HMNR9; uncertain significance." evidence="16">
    <original>L</original>
    <variation>Q</variation>
    <location>
        <position position="156"/>
    </location>
</feature>
<feature type="sequence variant" id="VAR_089038" description="In HMNR9; uncertain significance." evidence="16">
    <original>L</original>
    <variation>R</variation>
    <location>
        <position position="156"/>
    </location>
</feature>
<feature type="mutagenesis site" description="Reduces nuclear localization. Increases level of reactive oxygen species (ROS)." evidence="9">
    <original>R</original>
    <variation>A</variation>
    <location>
        <position position="28"/>
    </location>
</feature>
<feature type="mutagenesis site" description="Loss of function activity; when associated with A-208; A-212 and A-216." evidence="15">
    <original>R</original>
    <variation>A</variation>
    <location>
        <position position="51"/>
    </location>
</feature>
<feature type="mutagenesis site" description="No detectable ubiquinone is produced." evidence="11">
    <original>E</original>
    <variation>K</variation>
    <location>
        <position position="178"/>
    </location>
</feature>
<feature type="mutagenesis site" description="Loss of function activity; when associated with A-51; A-212 and A-216." evidence="15">
    <original>R</original>
    <variation>A</variation>
    <location>
        <position position="208"/>
    </location>
</feature>
<feature type="mutagenesis site" description="Loss of function activity; when associated with A-51; A-208 and A-216." evidence="15">
    <original>Y</original>
    <variation>A</variation>
    <location>
        <position position="212"/>
    </location>
</feature>
<feature type="mutagenesis site" description="Loss of function activity; when associated with A-51; A-208 and A-212." evidence="15">
    <original>R</original>
    <variation>A</variation>
    <location>
        <position position="216"/>
    </location>
</feature>
<feature type="sequence conflict" description="In Ref. 7; AAC69451." evidence="21" ref="7">
    <original>S</original>
    <variation>N</variation>
    <location>
        <position position="45"/>
    </location>
</feature>
<feature type="sequence conflict" description="In Ref. 2; CAB66582." evidence="21" ref="2">
    <original>G</original>
    <variation>W</variation>
    <location>
        <position position="69"/>
    </location>
</feature>
<feature type="sequence conflict" description="In Ref. 7; AAC69451." evidence="21" ref="7">
    <original>A</original>
    <variation>R</variation>
    <location>
        <position position="72"/>
    </location>
</feature>
<feature type="sequence conflict" description="In Ref. 7; AAC69451." evidence="21" ref="7">
    <original>K</original>
    <variation>R</variation>
    <location>
        <position position="172"/>
    </location>
</feature>
<feature type="helix" evidence="28">
    <location>
        <begin position="46"/>
        <end position="74"/>
    </location>
</feature>
<feature type="helix" evidence="28">
    <location>
        <begin position="80"/>
        <end position="104"/>
    </location>
</feature>
<feature type="helix" evidence="28">
    <location>
        <begin position="112"/>
        <end position="125"/>
    </location>
</feature>
<feature type="turn" evidence="28">
    <location>
        <begin position="126"/>
        <end position="128"/>
    </location>
</feature>
<feature type="helix" evidence="28">
    <location>
        <begin position="131"/>
        <end position="156"/>
    </location>
</feature>
<feature type="turn" evidence="28">
    <location>
        <begin position="157"/>
        <end position="159"/>
    </location>
</feature>
<feature type="turn" evidence="28">
    <location>
        <begin position="161"/>
        <end position="164"/>
    </location>
</feature>
<feature type="helix" evidence="28">
    <location>
        <begin position="165"/>
        <end position="177"/>
    </location>
</feature>
<feature type="turn" evidence="28">
    <location>
        <begin position="182"/>
        <end position="185"/>
    </location>
</feature>
<feature type="helix" evidence="28">
    <location>
        <begin position="194"/>
        <end position="214"/>
    </location>
</feature>
<dbReference type="EC" id="1.14.13.253" evidence="6"/>
<dbReference type="EMBL" id="AF098948">
    <property type="protein sequence ID" value="AAD43648.1"/>
    <property type="molecule type" value="mRNA"/>
</dbReference>
<dbReference type="EMBL" id="AL136647">
    <property type="protein sequence ID" value="CAB66582.1"/>
    <property type="molecule type" value="mRNA"/>
</dbReference>
<dbReference type="EMBL" id="AK024291">
    <property type="protein sequence ID" value="BAB14876.1"/>
    <property type="molecule type" value="mRNA"/>
</dbReference>
<dbReference type="EMBL" id="AK315470">
    <property type="protein sequence ID" value="BAG37856.1"/>
    <property type="molecule type" value="mRNA"/>
</dbReference>
<dbReference type="EMBL" id="AC099518">
    <property type="status" value="NOT_ANNOTATED_CDS"/>
    <property type="molecule type" value="Genomic_DNA"/>
</dbReference>
<dbReference type="EMBL" id="CH471186">
    <property type="protein sequence ID" value="EAW50268.1"/>
    <property type="molecule type" value="Genomic_DNA"/>
</dbReference>
<dbReference type="EMBL" id="BC003185">
    <property type="protein sequence ID" value="AAH03185.1"/>
    <property type="molecule type" value="mRNA"/>
</dbReference>
<dbReference type="EMBL" id="AF032900">
    <property type="protein sequence ID" value="AAC69451.1"/>
    <property type="molecule type" value="mRNA"/>
</dbReference>
<dbReference type="EMBL" id="U81276">
    <property type="protein sequence ID" value="AAC51120.1"/>
    <property type="molecule type" value="mRNA"/>
</dbReference>
<dbReference type="CCDS" id="CCDS10574.1">
    <molecule id="Q99807-1"/>
</dbReference>
<dbReference type="CCDS" id="CCDS53993.1">
    <molecule id="Q99807-2"/>
</dbReference>
<dbReference type="RefSeq" id="NP_001177912.1">
    <molecule id="Q99807-2"/>
    <property type="nucleotide sequence ID" value="NM_001190983.2"/>
</dbReference>
<dbReference type="RefSeq" id="NP_001357421.1">
    <molecule id="Q99807-2"/>
    <property type="nucleotide sequence ID" value="NM_001370492.1"/>
</dbReference>
<dbReference type="RefSeq" id="NP_001357422.1">
    <molecule id="Q99807-2"/>
    <property type="nucleotide sequence ID" value="NM_001370493.1"/>
</dbReference>
<dbReference type="RefSeq" id="NP_001357423.1">
    <molecule id="Q99807-2"/>
    <property type="nucleotide sequence ID" value="NM_001370494.1"/>
</dbReference>
<dbReference type="RefSeq" id="NP_057222.2">
    <molecule id="Q99807-1"/>
    <property type="nucleotide sequence ID" value="NM_016138.4"/>
</dbReference>
<dbReference type="RefSeq" id="XP_047289450.1">
    <molecule id="Q99807-1"/>
    <property type="nucleotide sequence ID" value="XM_047433494.1"/>
</dbReference>
<dbReference type="RefSeq" id="XP_047289451.1">
    <molecule id="Q99807-1"/>
    <property type="nucleotide sequence ID" value="XM_047433495.1"/>
</dbReference>
<dbReference type="RefSeq" id="XP_047289452.1">
    <molecule id="Q99807-1"/>
    <property type="nucleotide sequence ID" value="XM_047433496.1"/>
</dbReference>
<dbReference type="PDB" id="7SSP">
    <property type="method" value="EM"/>
    <property type="resolution" value="3.50 A"/>
    <property type="chains" value="E/F/G/H=1-217"/>
</dbReference>
<dbReference type="PDB" id="7SSS">
    <property type="method" value="EM"/>
    <property type="resolution" value="2.40 A"/>
    <property type="chains" value="E/F/G/H=1-217"/>
</dbReference>
<dbReference type="PDBsum" id="7SSP"/>
<dbReference type="PDBsum" id="7SSS"/>
<dbReference type="EMDB" id="EMD-25412"/>
<dbReference type="EMDB" id="EMD-25413"/>
<dbReference type="SMR" id="Q99807"/>
<dbReference type="BioGRID" id="115523">
    <property type="interactions" value="25"/>
</dbReference>
<dbReference type="ComplexPortal" id="CPX-3642">
    <property type="entry name" value="CoQ biosynthetic complex"/>
</dbReference>
<dbReference type="DIP" id="DIP-62092N"/>
<dbReference type="FunCoup" id="Q99807">
    <property type="interactions" value="615"/>
</dbReference>
<dbReference type="IntAct" id="Q99807">
    <property type="interactions" value="39"/>
</dbReference>
<dbReference type="STRING" id="9606.ENSP00000322316"/>
<dbReference type="ChEMBL" id="CHEMBL4630851"/>
<dbReference type="iPTMnet" id="Q99807"/>
<dbReference type="PhosphoSitePlus" id="Q99807"/>
<dbReference type="BioMuta" id="COQ7"/>
<dbReference type="DMDM" id="311033465"/>
<dbReference type="jPOST" id="Q99807"/>
<dbReference type="MassIVE" id="Q99807"/>
<dbReference type="PaxDb" id="9606-ENSP00000322316"/>
<dbReference type="PeptideAtlas" id="Q99807"/>
<dbReference type="ProteomicsDB" id="78485">
    <molecule id="Q99807-1"/>
</dbReference>
<dbReference type="ProteomicsDB" id="78486">
    <molecule id="Q99807-2"/>
</dbReference>
<dbReference type="Pumba" id="Q99807"/>
<dbReference type="TopDownProteomics" id="Q99807-1">
    <molecule id="Q99807-1"/>
</dbReference>
<dbReference type="TopDownProteomics" id="Q99807-2">
    <molecule id="Q99807-2"/>
</dbReference>
<dbReference type="Antibodypedia" id="42924">
    <property type="antibodies" value="178 antibodies from 25 providers"/>
</dbReference>
<dbReference type="DNASU" id="10229"/>
<dbReference type="Ensembl" id="ENST00000321998.10">
    <molecule id="Q99807-1"/>
    <property type="protein sequence ID" value="ENSP00000322316.5"/>
    <property type="gene ID" value="ENSG00000167186.11"/>
</dbReference>
<dbReference type="Ensembl" id="ENST00000544894.6">
    <molecule id="Q99807-2"/>
    <property type="protein sequence ID" value="ENSP00000442923.2"/>
    <property type="gene ID" value="ENSG00000167186.11"/>
</dbReference>
<dbReference type="Ensembl" id="ENST00000568985.5">
    <molecule id="Q99807-1"/>
    <property type="protein sequence ID" value="ENSP00000456734.1"/>
    <property type="gene ID" value="ENSG00000167186.11"/>
</dbReference>
<dbReference type="GeneID" id="10229"/>
<dbReference type="KEGG" id="hsa:10229"/>
<dbReference type="MANE-Select" id="ENST00000321998.10">
    <property type="protein sequence ID" value="ENSP00000322316.5"/>
    <property type="RefSeq nucleotide sequence ID" value="NM_016138.5"/>
    <property type="RefSeq protein sequence ID" value="NP_057222.2"/>
</dbReference>
<dbReference type="UCSC" id="uc002dfr.4">
    <molecule id="Q99807-1"/>
    <property type="organism name" value="human"/>
</dbReference>
<dbReference type="AGR" id="HGNC:2244"/>
<dbReference type="CTD" id="10229"/>
<dbReference type="DisGeNET" id="10229"/>
<dbReference type="GeneCards" id="COQ7"/>
<dbReference type="GeneReviews" id="COQ7"/>
<dbReference type="HGNC" id="HGNC:2244">
    <property type="gene designation" value="COQ7"/>
</dbReference>
<dbReference type="HPA" id="ENSG00000167186">
    <property type="expression patterns" value="Low tissue specificity"/>
</dbReference>
<dbReference type="MalaCards" id="COQ7"/>
<dbReference type="MIM" id="601683">
    <property type="type" value="gene"/>
</dbReference>
<dbReference type="MIM" id="616733">
    <property type="type" value="phenotype"/>
</dbReference>
<dbReference type="MIM" id="620402">
    <property type="type" value="phenotype"/>
</dbReference>
<dbReference type="neXtProt" id="NX_Q99807"/>
<dbReference type="OpenTargets" id="ENSG00000167186"/>
<dbReference type="Orphanet" id="658778">
    <property type="disease" value="COQ7-related distal hereditary motor neuropathy"/>
</dbReference>
<dbReference type="Orphanet" id="319678">
    <property type="disease" value="Encephalopathy-hypertrophic cardiomyopathy-renal tubular disease syndrome"/>
</dbReference>
<dbReference type="PharmGKB" id="PA26761"/>
<dbReference type="VEuPathDB" id="HostDB:ENSG00000167186"/>
<dbReference type="eggNOG" id="KOG4061">
    <property type="taxonomic scope" value="Eukaryota"/>
</dbReference>
<dbReference type="GeneTree" id="ENSGT00390000014520"/>
<dbReference type="HOGENOM" id="CLU_071892_2_0_1"/>
<dbReference type="InParanoid" id="Q99807"/>
<dbReference type="OMA" id="WSTAVMG"/>
<dbReference type="OrthoDB" id="275371at2759"/>
<dbReference type="PAN-GO" id="Q99807">
    <property type="GO annotations" value="7 GO annotations based on evolutionary models"/>
</dbReference>
<dbReference type="PhylomeDB" id="Q99807"/>
<dbReference type="TreeFam" id="TF314559"/>
<dbReference type="BioCyc" id="MetaCyc:ENSG00000167186-MONOMER"/>
<dbReference type="BRENDA" id="1.14.99.60">
    <property type="organism ID" value="2681"/>
</dbReference>
<dbReference type="PathwayCommons" id="Q99807"/>
<dbReference type="Reactome" id="R-HSA-2142789">
    <property type="pathway name" value="Ubiquinol biosynthesis"/>
</dbReference>
<dbReference type="SignaLink" id="Q99807"/>
<dbReference type="UniPathway" id="UPA00232"/>
<dbReference type="BioGRID-ORCS" id="10229">
    <property type="hits" value="147 hits in 1163 CRISPR screens"/>
</dbReference>
<dbReference type="ChiTaRS" id="COQ7">
    <property type="organism name" value="human"/>
</dbReference>
<dbReference type="GeneWiki" id="COQ7"/>
<dbReference type="GenomeRNAi" id="10229"/>
<dbReference type="Pharos" id="Q99807">
    <property type="development level" value="Tbio"/>
</dbReference>
<dbReference type="PRO" id="PR:Q99807"/>
<dbReference type="Proteomes" id="UP000005640">
    <property type="component" value="Chromosome 16"/>
</dbReference>
<dbReference type="RNAct" id="Q99807">
    <property type="molecule type" value="protein"/>
</dbReference>
<dbReference type="Bgee" id="ENSG00000167186">
    <property type="expression patterns" value="Expressed in primordial germ cell in gonad and 155 other cell types or tissues"/>
</dbReference>
<dbReference type="ExpressionAtlas" id="Q99807">
    <property type="expression patterns" value="baseline and differential"/>
</dbReference>
<dbReference type="GO" id="GO:0005694">
    <property type="term" value="C:chromosome"/>
    <property type="evidence" value="ECO:0007669"/>
    <property type="project" value="UniProtKB-SubCell"/>
</dbReference>
<dbReference type="GO" id="GO:0031314">
    <property type="term" value="C:extrinsic component of mitochondrial inner membrane"/>
    <property type="evidence" value="ECO:0007669"/>
    <property type="project" value="UniProtKB-UniRule"/>
</dbReference>
<dbReference type="GO" id="GO:0005743">
    <property type="term" value="C:mitochondrial inner membrane"/>
    <property type="evidence" value="ECO:0000314"/>
    <property type="project" value="ComplexPortal"/>
</dbReference>
<dbReference type="GO" id="GO:0005739">
    <property type="term" value="C:mitochondrion"/>
    <property type="evidence" value="ECO:0000314"/>
    <property type="project" value="WormBase"/>
</dbReference>
<dbReference type="GO" id="GO:0005634">
    <property type="term" value="C:nucleus"/>
    <property type="evidence" value="ECO:0000314"/>
    <property type="project" value="LIFEdb"/>
</dbReference>
<dbReference type="GO" id="GO:0110142">
    <property type="term" value="C:ubiquinone biosynthesis complex"/>
    <property type="evidence" value="ECO:0000353"/>
    <property type="project" value="ComplexPortal"/>
</dbReference>
<dbReference type="GO" id="GO:0008682">
    <property type="term" value="F:3-demethoxyubiquinol 3-hydroxylase activity"/>
    <property type="evidence" value="ECO:0000318"/>
    <property type="project" value="GO_Central"/>
</dbReference>
<dbReference type="GO" id="GO:0160224">
    <property type="term" value="F:3-demethoxyubiquinone 3-hydroxylase (NADH) activity"/>
    <property type="evidence" value="ECO:0000314"/>
    <property type="project" value="UniProtKB"/>
</dbReference>
<dbReference type="GO" id="GO:0003682">
    <property type="term" value="F:chromatin binding"/>
    <property type="evidence" value="ECO:0000314"/>
    <property type="project" value="WormBase"/>
</dbReference>
<dbReference type="GO" id="GO:0046872">
    <property type="term" value="F:metal ion binding"/>
    <property type="evidence" value="ECO:0007669"/>
    <property type="project" value="UniProtKB-KW"/>
</dbReference>
<dbReference type="GO" id="GO:0008340">
    <property type="term" value="P:determination of adult lifespan"/>
    <property type="evidence" value="ECO:0000318"/>
    <property type="project" value="GO_Central"/>
</dbReference>
<dbReference type="GO" id="GO:0000122">
    <property type="term" value="P:negative regulation of transcription by RNA polymerase II"/>
    <property type="evidence" value="ECO:0000315"/>
    <property type="project" value="WormBase"/>
</dbReference>
<dbReference type="GO" id="GO:0045944">
    <property type="term" value="P:positive regulation of transcription by RNA polymerase II"/>
    <property type="evidence" value="ECO:0000315"/>
    <property type="project" value="WormBase"/>
</dbReference>
<dbReference type="GO" id="GO:0010468">
    <property type="term" value="P:regulation of gene expression"/>
    <property type="evidence" value="ECO:0000318"/>
    <property type="project" value="GO_Central"/>
</dbReference>
<dbReference type="GO" id="GO:2000377">
    <property type="term" value="P:regulation of reactive oxygen species metabolic process"/>
    <property type="evidence" value="ECO:0000315"/>
    <property type="project" value="WormBase"/>
</dbReference>
<dbReference type="GO" id="GO:0006744">
    <property type="term" value="P:ubiquinone biosynthetic process"/>
    <property type="evidence" value="ECO:0000314"/>
    <property type="project" value="UniProtKB"/>
</dbReference>
<dbReference type="CDD" id="cd01042">
    <property type="entry name" value="DMQH"/>
    <property type="match status" value="1"/>
</dbReference>
<dbReference type="HAMAP" id="MF_01658">
    <property type="entry name" value="COQ7"/>
    <property type="match status" value="1"/>
</dbReference>
<dbReference type="InterPro" id="IPR009078">
    <property type="entry name" value="Ferritin-like_SF"/>
</dbReference>
<dbReference type="InterPro" id="IPR011566">
    <property type="entry name" value="Ubq_synth_Coq7"/>
</dbReference>
<dbReference type="PANTHER" id="PTHR11237:SF4">
    <property type="entry name" value="5-DEMETHOXYUBIQUINONE HYDROXYLASE, MITOCHONDRIAL"/>
    <property type="match status" value="1"/>
</dbReference>
<dbReference type="PANTHER" id="PTHR11237">
    <property type="entry name" value="COENZYME Q10 BIOSYNTHESIS PROTEIN 7"/>
    <property type="match status" value="1"/>
</dbReference>
<dbReference type="Pfam" id="PF03232">
    <property type="entry name" value="COQ7"/>
    <property type="match status" value="1"/>
</dbReference>
<dbReference type="SUPFAM" id="SSF47240">
    <property type="entry name" value="Ferritin-like"/>
    <property type="match status" value="1"/>
</dbReference>
<accession>Q99807</accession>
<accession>B2RDA9</accession>
<accession>Q9BTT7</accession>
<accession>Q9H0T5</accession>
<accession>Q9UEW5</accession>
<accession>Q9UNR5</accession>